<comment type="function">
    <text evidence="1">Dual-specificity methyltransferase that catalyzes the formation of 5-methyluridine at position 54 (m5U54) in all tRNAs, and that of position 341 (m5U341) in tmRNA (transfer-mRNA).</text>
</comment>
<comment type="catalytic activity">
    <reaction evidence="1">
        <text>uridine(54) in tRNA + S-adenosyl-L-methionine = 5-methyluridine(54) in tRNA + S-adenosyl-L-homocysteine + H(+)</text>
        <dbReference type="Rhea" id="RHEA:42712"/>
        <dbReference type="Rhea" id="RHEA-COMP:10167"/>
        <dbReference type="Rhea" id="RHEA-COMP:10193"/>
        <dbReference type="ChEBI" id="CHEBI:15378"/>
        <dbReference type="ChEBI" id="CHEBI:57856"/>
        <dbReference type="ChEBI" id="CHEBI:59789"/>
        <dbReference type="ChEBI" id="CHEBI:65315"/>
        <dbReference type="ChEBI" id="CHEBI:74447"/>
        <dbReference type="EC" id="2.1.1.35"/>
    </reaction>
</comment>
<comment type="catalytic activity">
    <reaction evidence="1">
        <text>uridine(341) in tmRNA + S-adenosyl-L-methionine = 5-methyluridine(341) in tmRNA + S-adenosyl-L-homocysteine + H(+)</text>
        <dbReference type="Rhea" id="RHEA:43612"/>
        <dbReference type="Rhea" id="RHEA-COMP:10630"/>
        <dbReference type="Rhea" id="RHEA-COMP:10631"/>
        <dbReference type="ChEBI" id="CHEBI:15378"/>
        <dbReference type="ChEBI" id="CHEBI:57856"/>
        <dbReference type="ChEBI" id="CHEBI:59789"/>
        <dbReference type="ChEBI" id="CHEBI:65315"/>
        <dbReference type="ChEBI" id="CHEBI:74447"/>
    </reaction>
</comment>
<comment type="similarity">
    <text evidence="1">Belongs to the class I-like SAM-binding methyltransferase superfamily. RNA M5U methyltransferase family. TrmA subfamily.</text>
</comment>
<gene>
    <name evidence="1" type="primary">trmA</name>
    <name type="ordered locus">PSHAa0250</name>
</gene>
<name>TRMA_PSET1</name>
<accession>Q3ILM2</accession>
<dbReference type="EC" id="2.1.1.-" evidence="1"/>
<dbReference type="EC" id="2.1.1.35" evidence="1"/>
<dbReference type="EMBL" id="CR954246">
    <property type="protein sequence ID" value="CAI85353.1"/>
    <property type="molecule type" value="Genomic_DNA"/>
</dbReference>
<dbReference type="SMR" id="Q3ILM2"/>
<dbReference type="STRING" id="326442.PSHAa0250"/>
<dbReference type="KEGG" id="pha:PSHAa0250"/>
<dbReference type="PATRIC" id="fig|326442.8.peg.241"/>
<dbReference type="eggNOG" id="COG2265">
    <property type="taxonomic scope" value="Bacteria"/>
</dbReference>
<dbReference type="HOGENOM" id="CLU_043022_0_0_6"/>
<dbReference type="BioCyc" id="PHAL326442:PSHA_RS01235-MONOMER"/>
<dbReference type="Proteomes" id="UP000006843">
    <property type="component" value="Chromosome I"/>
</dbReference>
<dbReference type="GO" id="GO:0005829">
    <property type="term" value="C:cytosol"/>
    <property type="evidence" value="ECO:0007669"/>
    <property type="project" value="TreeGrafter"/>
</dbReference>
<dbReference type="GO" id="GO:0019843">
    <property type="term" value="F:rRNA binding"/>
    <property type="evidence" value="ECO:0007669"/>
    <property type="project" value="TreeGrafter"/>
</dbReference>
<dbReference type="GO" id="GO:0030697">
    <property type="term" value="F:tRNA (uracil(54)-C5)-methyltransferase activity, S-adenosyl methionine-dependent"/>
    <property type="evidence" value="ECO:0007669"/>
    <property type="project" value="UniProtKB-UniRule"/>
</dbReference>
<dbReference type="GO" id="GO:0000049">
    <property type="term" value="F:tRNA binding"/>
    <property type="evidence" value="ECO:0007669"/>
    <property type="project" value="TreeGrafter"/>
</dbReference>
<dbReference type="GO" id="GO:0030488">
    <property type="term" value="P:tRNA methylation"/>
    <property type="evidence" value="ECO:0007669"/>
    <property type="project" value="UniProtKB-UniRule"/>
</dbReference>
<dbReference type="CDD" id="cd02440">
    <property type="entry name" value="AdoMet_MTases"/>
    <property type="match status" value="1"/>
</dbReference>
<dbReference type="FunFam" id="2.40.50.1070:FF:000001">
    <property type="entry name" value="tRNA/tmRNA (uracil-C(5))-methyltransferase"/>
    <property type="match status" value="1"/>
</dbReference>
<dbReference type="FunFam" id="3.40.50.150:FF:000012">
    <property type="entry name" value="tRNA/tmRNA (uracil-C(5))-methyltransferase"/>
    <property type="match status" value="1"/>
</dbReference>
<dbReference type="Gene3D" id="2.40.50.1070">
    <property type="match status" value="1"/>
</dbReference>
<dbReference type="Gene3D" id="3.40.50.150">
    <property type="entry name" value="Vaccinia Virus protein VP39"/>
    <property type="match status" value="1"/>
</dbReference>
<dbReference type="HAMAP" id="MF_01011">
    <property type="entry name" value="RNA_methyltr_TrmA"/>
    <property type="match status" value="1"/>
</dbReference>
<dbReference type="InterPro" id="IPR030390">
    <property type="entry name" value="MeTrfase_TrmA_AS"/>
</dbReference>
<dbReference type="InterPro" id="IPR030391">
    <property type="entry name" value="MeTrfase_TrmA_CS"/>
</dbReference>
<dbReference type="InterPro" id="IPR029063">
    <property type="entry name" value="SAM-dependent_MTases_sf"/>
</dbReference>
<dbReference type="InterPro" id="IPR011869">
    <property type="entry name" value="TrmA_MeTrfase"/>
</dbReference>
<dbReference type="InterPro" id="IPR010280">
    <property type="entry name" value="U5_MeTrfase_fam"/>
</dbReference>
<dbReference type="NCBIfam" id="TIGR02143">
    <property type="entry name" value="trmA_only"/>
    <property type="match status" value="1"/>
</dbReference>
<dbReference type="PANTHER" id="PTHR47790">
    <property type="entry name" value="TRNA/TMRNA (URACIL-C(5))-METHYLTRANSFERASE"/>
    <property type="match status" value="1"/>
</dbReference>
<dbReference type="PANTHER" id="PTHR47790:SF2">
    <property type="entry name" value="TRNA_TMRNA (URACIL-C(5))-METHYLTRANSFERASE"/>
    <property type="match status" value="1"/>
</dbReference>
<dbReference type="Pfam" id="PF05958">
    <property type="entry name" value="tRNA_U5-meth_tr"/>
    <property type="match status" value="1"/>
</dbReference>
<dbReference type="SUPFAM" id="SSF53335">
    <property type="entry name" value="S-adenosyl-L-methionine-dependent methyltransferases"/>
    <property type="match status" value="1"/>
</dbReference>
<dbReference type="PROSITE" id="PS51687">
    <property type="entry name" value="SAM_MT_RNA_M5U"/>
    <property type="match status" value="1"/>
</dbReference>
<dbReference type="PROSITE" id="PS01230">
    <property type="entry name" value="TRMA_1"/>
    <property type="match status" value="1"/>
</dbReference>
<dbReference type="PROSITE" id="PS01231">
    <property type="entry name" value="TRMA_2"/>
    <property type="match status" value="1"/>
</dbReference>
<reference key="1">
    <citation type="journal article" date="2005" name="Genome Res.">
        <title>Coping with cold: the genome of the versatile marine Antarctica bacterium Pseudoalteromonas haloplanktis TAC125.</title>
        <authorList>
            <person name="Medigue C."/>
            <person name="Krin E."/>
            <person name="Pascal G."/>
            <person name="Barbe V."/>
            <person name="Bernsel A."/>
            <person name="Bertin P.N."/>
            <person name="Cheung F."/>
            <person name="Cruveiller S."/>
            <person name="D'Amico S."/>
            <person name="Duilio A."/>
            <person name="Fang G."/>
            <person name="Feller G."/>
            <person name="Ho C."/>
            <person name="Mangenot S."/>
            <person name="Marino G."/>
            <person name="Nilsson J."/>
            <person name="Parrilli E."/>
            <person name="Rocha E.P.C."/>
            <person name="Rouy Z."/>
            <person name="Sekowska A."/>
            <person name="Tutino M.L."/>
            <person name="Vallenet D."/>
            <person name="von Heijne G."/>
            <person name="Danchin A."/>
        </authorList>
    </citation>
    <scope>NUCLEOTIDE SEQUENCE [LARGE SCALE GENOMIC DNA]</scope>
    <source>
        <strain>TAC 125</strain>
    </source>
</reference>
<keyword id="KW-0489">Methyltransferase</keyword>
<keyword id="KW-1185">Reference proteome</keyword>
<keyword id="KW-0949">S-adenosyl-L-methionine</keyword>
<keyword id="KW-0808">Transferase</keyword>
<keyword id="KW-0819">tRNA processing</keyword>
<protein>
    <recommendedName>
        <fullName evidence="1">tRNA/tmRNA (uracil-C(5))-methyltransferase</fullName>
        <ecNumber evidence="1">2.1.1.-</ecNumber>
        <ecNumber evidence="1">2.1.1.35</ecNumber>
    </recommendedName>
    <alternativeName>
        <fullName evidence="1">tRNA (uracil(54)-C(5))-methyltransferase</fullName>
    </alternativeName>
    <alternativeName>
        <fullName evidence="1">tRNA(m5U54)-methyltransferase</fullName>
        <shortName evidence="1">RUMT</shortName>
    </alternativeName>
    <alternativeName>
        <fullName evidence="1">tmRNA (uracil(341)-C(5))-methyltransferase</fullName>
    </alternativeName>
</protein>
<feature type="chain" id="PRO_0000281449" description="tRNA/tmRNA (uracil-C(5))-methyltransferase">
    <location>
        <begin position="1"/>
        <end position="367"/>
    </location>
</feature>
<feature type="active site" description="Nucleophile" evidence="1">
    <location>
        <position position="323"/>
    </location>
</feature>
<feature type="active site" description="Proton acceptor" evidence="1">
    <location>
        <position position="357"/>
    </location>
</feature>
<feature type="binding site" evidence="1">
    <location>
        <position position="189"/>
    </location>
    <ligand>
        <name>S-adenosyl-L-methionine</name>
        <dbReference type="ChEBI" id="CHEBI:59789"/>
    </ligand>
</feature>
<feature type="binding site" evidence="1">
    <location>
        <position position="217"/>
    </location>
    <ligand>
        <name>S-adenosyl-L-methionine</name>
        <dbReference type="ChEBI" id="CHEBI:59789"/>
    </ligand>
</feature>
<feature type="binding site" evidence="1">
    <location>
        <position position="222"/>
    </location>
    <ligand>
        <name>S-adenosyl-L-methionine</name>
        <dbReference type="ChEBI" id="CHEBI:59789"/>
    </ligand>
</feature>
<feature type="binding site" evidence="1">
    <location>
        <position position="238"/>
    </location>
    <ligand>
        <name>S-adenosyl-L-methionine</name>
        <dbReference type="ChEBI" id="CHEBI:59789"/>
    </ligand>
</feature>
<feature type="binding site" evidence="1">
    <location>
        <position position="298"/>
    </location>
    <ligand>
        <name>S-adenosyl-L-methionine</name>
        <dbReference type="ChEBI" id="CHEBI:59789"/>
    </ligand>
</feature>
<evidence type="ECO:0000255" key="1">
    <source>
        <dbReference type="HAMAP-Rule" id="MF_01011"/>
    </source>
</evidence>
<sequence>MAVIKIDTSQYDAQLSEKEQRIAAQFQRFGVDKLEVFSSEPINYRQRAEFRVWHDGDDLFHIMFDQQTKDKIRVDSFDPAAPLVGEVMQVMIDNLKSCEILRRKLFQIDYLSTLSGEILVSLLYHKPLDEHWLSEINTLKEKLSSKYKIDFIGRARKQKEMLGDDYVTERLNVNGQELIYQQVENSFTQPNAKVNIKMLEWAQDLCKPLKNDLLELYCGNGNFSIALAGSFNKVLATEISKSSVHSAQYNIAQNKVDNLDIIRMSSEEFTQAMNGERSFSRLEGIDLNSYNCQTILVDPPRAGMDTLTCDLVANYESIIYISCNPETLERDLDHLTRTHEVKRFAIFDQFPYTHHIESGVFLQKKNT</sequence>
<organism>
    <name type="scientific">Pseudoalteromonas translucida (strain TAC 125)</name>
    <dbReference type="NCBI Taxonomy" id="326442"/>
    <lineage>
        <taxon>Bacteria</taxon>
        <taxon>Pseudomonadati</taxon>
        <taxon>Pseudomonadota</taxon>
        <taxon>Gammaproteobacteria</taxon>
        <taxon>Alteromonadales</taxon>
        <taxon>Pseudoalteromonadaceae</taxon>
        <taxon>Pseudoalteromonas</taxon>
    </lineage>
</organism>
<proteinExistence type="inferred from homology"/>